<feature type="chain" id="PRO_0000060595" description="Cytochrome b">
    <location>
        <begin position="1"/>
        <end position="381"/>
    </location>
</feature>
<feature type="transmembrane region" description="Helical" evidence="2">
    <location>
        <begin position="33"/>
        <end position="53"/>
    </location>
</feature>
<feature type="transmembrane region" description="Helical" evidence="2">
    <location>
        <begin position="77"/>
        <end position="98"/>
    </location>
</feature>
<feature type="transmembrane region" description="Helical" evidence="2">
    <location>
        <begin position="113"/>
        <end position="133"/>
    </location>
</feature>
<feature type="transmembrane region" description="Helical" evidence="2">
    <location>
        <begin position="178"/>
        <end position="198"/>
    </location>
</feature>
<feature type="transmembrane region" description="Helical" evidence="2">
    <location>
        <begin position="226"/>
        <end position="246"/>
    </location>
</feature>
<feature type="transmembrane region" description="Helical" evidence="2">
    <location>
        <begin position="288"/>
        <end position="308"/>
    </location>
</feature>
<feature type="transmembrane region" description="Helical" evidence="2">
    <location>
        <begin position="320"/>
        <end position="340"/>
    </location>
</feature>
<feature type="transmembrane region" description="Helical" evidence="2">
    <location>
        <begin position="347"/>
        <end position="367"/>
    </location>
</feature>
<feature type="binding site" description="axial binding residue" evidence="2">
    <location>
        <position position="83"/>
    </location>
    <ligand>
        <name>heme b</name>
        <dbReference type="ChEBI" id="CHEBI:60344"/>
        <label>b562</label>
    </ligand>
    <ligandPart>
        <name>Fe</name>
        <dbReference type="ChEBI" id="CHEBI:18248"/>
    </ligandPart>
</feature>
<feature type="binding site" description="axial binding residue" evidence="2">
    <location>
        <position position="97"/>
    </location>
    <ligand>
        <name>heme b</name>
        <dbReference type="ChEBI" id="CHEBI:60344"/>
        <label>b566</label>
    </ligand>
    <ligandPart>
        <name>Fe</name>
        <dbReference type="ChEBI" id="CHEBI:18248"/>
    </ligandPart>
</feature>
<feature type="binding site" description="axial binding residue" evidence="2">
    <location>
        <position position="182"/>
    </location>
    <ligand>
        <name>heme b</name>
        <dbReference type="ChEBI" id="CHEBI:60344"/>
        <label>b562</label>
    </ligand>
    <ligandPart>
        <name>Fe</name>
        <dbReference type="ChEBI" id="CHEBI:18248"/>
    </ligandPart>
</feature>
<feature type="binding site" description="axial binding residue" evidence="2">
    <location>
        <position position="196"/>
    </location>
    <ligand>
        <name>heme b</name>
        <dbReference type="ChEBI" id="CHEBI:60344"/>
        <label>b566</label>
    </ligand>
    <ligandPart>
        <name>Fe</name>
        <dbReference type="ChEBI" id="CHEBI:18248"/>
    </ligandPart>
</feature>
<feature type="binding site" evidence="2">
    <location>
        <position position="201"/>
    </location>
    <ligand>
        <name>a ubiquinone</name>
        <dbReference type="ChEBI" id="CHEBI:16389"/>
    </ligand>
</feature>
<proteinExistence type="inferred from homology"/>
<geneLocation type="mitochondrion"/>
<organism>
    <name type="scientific">Antechinus leo</name>
    <name type="common">Cinnamon antechinus</name>
    <dbReference type="NCBI Taxonomy" id="65606"/>
    <lineage>
        <taxon>Eukaryota</taxon>
        <taxon>Metazoa</taxon>
        <taxon>Chordata</taxon>
        <taxon>Craniata</taxon>
        <taxon>Vertebrata</taxon>
        <taxon>Euteleostomi</taxon>
        <taxon>Mammalia</taxon>
        <taxon>Metatheria</taxon>
        <taxon>Dasyuromorphia</taxon>
        <taxon>Dasyuridae</taxon>
        <taxon>Antechinus</taxon>
    </lineage>
</organism>
<protein>
    <recommendedName>
        <fullName>Cytochrome b</fullName>
    </recommendedName>
    <alternativeName>
        <fullName>Complex III subunit 3</fullName>
    </alternativeName>
    <alternativeName>
        <fullName>Complex III subunit III</fullName>
    </alternativeName>
    <alternativeName>
        <fullName>Cytochrome b-c1 complex subunit 3</fullName>
    </alternativeName>
    <alternativeName>
        <fullName>Ubiquinol-cytochrome-c reductase complex cytochrome b subunit</fullName>
    </alternativeName>
</protein>
<evidence type="ECO:0000250" key="1"/>
<evidence type="ECO:0000250" key="2">
    <source>
        <dbReference type="UniProtKB" id="P00157"/>
    </source>
</evidence>
<evidence type="ECO:0000255" key="3">
    <source>
        <dbReference type="PROSITE-ProRule" id="PRU00967"/>
    </source>
</evidence>
<evidence type="ECO:0000255" key="4">
    <source>
        <dbReference type="PROSITE-ProRule" id="PRU00968"/>
    </source>
</evidence>
<accession>O63537</accession>
<name>CYB_ANTLE</name>
<keyword id="KW-0249">Electron transport</keyword>
<keyword id="KW-0349">Heme</keyword>
<keyword id="KW-0408">Iron</keyword>
<keyword id="KW-0472">Membrane</keyword>
<keyword id="KW-0479">Metal-binding</keyword>
<keyword id="KW-0496">Mitochondrion</keyword>
<keyword id="KW-0999">Mitochondrion inner membrane</keyword>
<keyword id="KW-0679">Respiratory chain</keyword>
<keyword id="KW-0812">Transmembrane</keyword>
<keyword id="KW-1133">Transmembrane helix</keyword>
<keyword id="KW-0813">Transport</keyword>
<keyword id="KW-0830">Ubiquinone</keyword>
<reference key="1">
    <citation type="journal article" date="1998" name="J. Mammal.">
        <title>Phylogeny of the dasyurid marsupial genus Antechinus based on cytochrome b, 12S rRNA, and protamine P1 genes.</title>
        <authorList>
            <person name="Armstrong L.A."/>
            <person name="Krajewski C."/>
            <person name="Westerman M."/>
        </authorList>
    </citation>
    <scope>NUCLEOTIDE SEQUENCE [GENOMIC DNA]</scope>
</reference>
<dbReference type="EMBL" id="AF038289">
    <property type="protein sequence ID" value="AAC15616.1"/>
    <property type="molecule type" value="Genomic_DNA"/>
</dbReference>
<dbReference type="SMR" id="O63537"/>
<dbReference type="GO" id="GO:0005743">
    <property type="term" value="C:mitochondrial inner membrane"/>
    <property type="evidence" value="ECO:0007669"/>
    <property type="project" value="UniProtKB-SubCell"/>
</dbReference>
<dbReference type="GO" id="GO:0045275">
    <property type="term" value="C:respiratory chain complex III"/>
    <property type="evidence" value="ECO:0007669"/>
    <property type="project" value="InterPro"/>
</dbReference>
<dbReference type="GO" id="GO:0046872">
    <property type="term" value="F:metal ion binding"/>
    <property type="evidence" value="ECO:0007669"/>
    <property type="project" value="UniProtKB-KW"/>
</dbReference>
<dbReference type="GO" id="GO:0008121">
    <property type="term" value="F:ubiquinol-cytochrome-c reductase activity"/>
    <property type="evidence" value="ECO:0007669"/>
    <property type="project" value="InterPro"/>
</dbReference>
<dbReference type="GO" id="GO:0006122">
    <property type="term" value="P:mitochondrial electron transport, ubiquinol to cytochrome c"/>
    <property type="evidence" value="ECO:0007669"/>
    <property type="project" value="TreeGrafter"/>
</dbReference>
<dbReference type="CDD" id="cd00290">
    <property type="entry name" value="cytochrome_b_C"/>
    <property type="match status" value="1"/>
</dbReference>
<dbReference type="CDD" id="cd00284">
    <property type="entry name" value="Cytochrome_b_N"/>
    <property type="match status" value="1"/>
</dbReference>
<dbReference type="FunFam" id="1.20.810.10:FF:000002">
    <property type="entry name" value="Cytochrome b"/>
    <property type="match status" value="1"/>
</dbReference>
<dbReference type="Gene3D" id="1.20.810.10">
    <property type="entry name" value="Cytochrome Bc1 Complex, Chain C"/>
    <property type="match status" value="1"/>
</dbReference>
<dbReference type="InterPro" id="IPR005798">
    <property type="entry name" value="Cyt_b/b6_C"/>
</dbReference>
<dbReference type="InterPro" id="IPR036150">
    <property type="entry name" value="Cyt_b/b6_C_sf"/>
</dbReference>
<dbReference type="InterPro" id="IPR005797">
    <property type="entry name" value="Cyt_b/b6_N"/>
</dbReference>
<dbReference type="InterPro" id="IPR027387">
    <property type="entry name" value="Cytb/b6-like_sf"/>
</dbReference>
<dbReference type="InterPro" id="IPR030689">
    <property type="entry name" value="Cytochrome_b"/>
</dbReference>
<dbReference type="InterPro" id="IPR048260">
    <property type="entry name" value="Cytochrome_b_C_euk/bac"/>
</dbReference>
<dbReference type="InterPro" id="IPR048259">
    <property type="entry name" value="Cytochrome_b_N_euk/bac"/>
</dbReference>
<dbReference type="InterPro" id="IPR016174">
    <property type="entry name" value="Di-haem_cyt_TM"/>
</dbReference>
<dbReference type="PANTHER" id="PTHR19271">
    <property type="entry name" value="CYTOCHROME B"/>
    <property type="match status" value="1"/>
</dbReference>
<dbReference type="PANTHER" id="PTHR19271:SF16">
    <property type="entry name" value="CYTOCHROME B"/>
    <property type="match status" value="1"/>
</dbReference>
<dbReference type="Pfam" id="PF00032">
    <property type="entry name" value="Cytochrom_B_C"/>
    <property type="match status" value="1"/>
</dbReference>
<dbReference type="Pfam" id="PF00033">
    <property type="entry name" value="Cytochrome_B"/>
    <property type="match status" value="1"/>
</dbReference>
<dbReference type="PIRSF" id="PIRSF038885">
    <property type="entry name" value="COB"/>
    <property type="match status" value="1"/>
</dbReference>
<dbReference type="SUPFAM" id="SSF81648">
    <property type="entry name" value="a domain/subunit of cytochrome bc1 complex (Ubiquinol-cytochrome c reductase)"/>
    <property type="match status" value="1"/>
</dbReference>
<dbReference type="SUPFAM" id="SSF81342">
    <property type="entry name" value="Transmembrane di-heme cytochromes"/>
    <property type="match status" value="1"/>
</dbReference>
<dbReference type="PROSITE" id="PS51003">
    <property type="entry name" value="CYTB_CTER"/>
    <property type="match status" value="1"/>
</dbReference>
<dbReference type="PROSITE" id="PS51002">
    <property type="entry name" value="CYTB_NTER"/>
    <property type="match status" value="1"/>
</dbReference>
<comment type="function">
    <text evidence="2">Component of the ubiquinol-cytochrome c reductase complex (complex III or cytochrome b-c1 complex) that is part of the mitochondrial respiratory chain. The b-c1 complex mediates electron transfer from ubiquinol to cytochrome c. Contributes to the generation of a proton gradient across the mitochondrial membrane that is then used for ATP synthesis.</text>
</comment>
<comment type="cofactor">
    <cofactor evidence="2">
        <name>heme b</name>
        <dbReference type="ChEBI" id="CHEBI:60344"/>
    </cofactor>
    <text evidence="2">Binds 2 heme b groups non-covalently.</text>
</comment>
<comment type="subunit">
    <text evidence="2">The cytochrome bc1 complex contains 11 subunits: 3 respiratory subunits (MT-CYB, CYC1 and UQCRFS1), 2 core proteins (UQCRC1 and UQCRC2) and 6 low-molecular weight proteins (UQCRH/QCR6, UQCRB/QCR7, UQCRQ/QCR8, UQCR10/QCR9, UQCR11/QCR10 and a cleavage product of UQCRFS1). This cytochrome bc1 complex then forms a dimer.</text>
</comment>
<comment type="subcellular location">
    <subcellularLocation>
        <location evidence="2">Mitochondrion inner membrane</location>
        <topology evidence="2">Multi-pass membrane protein</topology>
    </subcellularLocation>
</comment>
<comment type="miscellaneous">
    <text evidence="1">Heme 1 (or BL or b562) is low-potential and absorbs at about 562 nm, and heme 2 (or BH or b566) is high-potential and absorbs at about 566 nm.</text>
</comment>
<comment type="similarity">
    <text evidence="3 4">Belongs to the cytochrome b family.</text>
</comment>
<comment type="caution">
    <text evidence="2">The full-length protein contains only eight transmembrane helices, not nine as predicted by bioinformatics tools.</text>
</comment>
<gene>
    <name type="primary">MT-CYB</name>
    <name type="synonym">COB</name>
    <name type="synonym">CYTB</name>
    <name type="synonym">MTCYB</name>
</gene>
<sequence>MINLRKTHPLMKIINHSFIDLPAPSNISAWWNFGSLLGICLIIQILTGLFLAMHYTSDTLTAFSSVAHICRDVNYGWLIRNLHANGASMFFMCLFLHVGRGIYYGSYLYKETWNIGVILLLTVMATAFVGYVLPWGQMSFWGATVITNLLSAIPYIGTTLAEWIWGGFAVDKATLTRFFAFHFILPFIIVALAIVHLLFLHETGSNNPTGINPDSDKIPFHPYYTIKDALGLMFLFLILLLLALFSPDSLGDPDNFSPANPLNTPPHIKPEWYFLFAYAILRSIPNKLGGVLALLASILILLIMPFLHTANQRSMMFRPVSQTLFWILTANLITLTWIGGQPVEQPFIIIGQLASMLYFLLILVLMPLAGLFENYMLKPKW</sequence>